<reference key="1">
    <citation type="journal article" date="1991" name="Biochimie">
        <title>Primary structures of ribosomal proteins from the archaebacterium Halobacterium marismortui and the eubacterium Bacillus stearothermophilus.</title>
        <authorList>
            <person name="Arndt E."/>
            <person name="Scholzen T."/>
            <person name="Kromer W."/>
            <person name="Hatakeyama T."/>
            <person name="Kimura M."/>
        </authorList>
    </citation>
    <scope>PROTEIN SEQUENCE OF 2-89</scope>
</reference>
<reference key="2">
    <citation type="journal article" date="1974" name="FEBS Lett.">
        <title>Procaryotic ribosomal proteins: N-terminal sequence homologies and structural correspondence of 30 S ribosomal proteins from Escherichia coli and Bacillus stearothermophilus.</title>
        <authorList>
            <person name="Yaguchi M."/>
            <person name="Matheson A.T."/>
            <person name="Visentin L.P."/>
        </authorList>
    </citation>
    <scope>PROTEIN SEQUENCE OF 2-16</scope>
    <source>
        <strain>DSM 13240 / CIP 106956 / 10</strain>
    </source>
</reference>
<reference key="3">
    <citation type="journal article" date="1998" name="Structure">
        <title>Conformational variability of the N-terminal helix in the structure of ribosomal protein S15.</title>
        <authorList>
            <person name="Clemons W.M. Jr."/>
            <person name="Davies C."/>
            <person name="White S.W."/>
            <person name="Ramakrishnan V."/>
        </authorList>
    </citation>
    <scope>X-RAY CRYSTALLOGRAPHY (2.1 ANGSTROMS)</scope>
    <scope>SEQUENCE REVISION TO 46</scope>
</reference>
<organism>
    <name type="scientific">Geobacillus stearothermophilus</name>
    <name type="common">Bacillus stearothermophilus</name>
    <dbReference type="NCBI Taxonomy" id="1422"/>
    <lineage>
        <taxon>Bacteria</taxon>
        <taxon>Bacillati</taxon>
        <taxon>Bacillota</taxon>
        <taxon>Bacilli</taxon>
        <taxon>Bacillales</taxon>
        <taxon>Anoxybacillaceae</taxon>
        <taxon>Geobacillus</taxon>
    </lineage>
</organism>
<evidence type="ECO:0000255" key="1">
    <source>
        <dbReference type="HAMAP-Rule" id="MF_01343"/>
    </source>
</evidence>
<evidence type="ECO:0000269" key="2">
    <source>
    </source>
</evidence>
<evidence type="ECO:0000269" key="3">
    <source>
    </source>
</evidence>
<evidence type="ECO:0000305" key="4"/>
<evidence type="ECO:0007829" key="5">
    <source>
        <dbReference type="PDB" id="1A32"/>
    </source>
</evidence>
<feature type="initiator methionine" description="Removed" evidence="2 3">
    <location>
        <position position="1"/>
    </location>
</feature>
<feature type="chain" id="PRO_0000115380" description="Small ribosomal subunit protein uS15">
    <location>
        <begin position="2"/>
        <end position="89"/>
    </location>
</feature>
<feature type="sequence conflict" description="In Ref. 2; AA sequence." evidence="4" ref="2">
    <original>EQ</original>
    <variation>GE</variation>
    <location>
        <begin position="13"/>
        <end position="14"/>
    </location>
</feature>
<feature type="sequence conflict" description="In Ref. 1; AA sequence." evidence="4" ref="1">
    <original>H</original>
    <variation>R</variation>
    <location>
        <position position="46"/>
    </location>
</feature>
<feature type="helix" evidence="5">
    <location>
        <begin position="5"/>
        <end position="14"/>
    </location>
</feature>
<feature type="helix" evidence="5">
    <location>
        <begin position="25"/>
        <end position="45"/>
    </location>
</feature>
<feature type="helix" evidence="5">
    <location>
        <begin position="51"/>
        <end position="73"/>
    </location>
</feature>
<feature type="helix" evidence="5">
    <location>
        <begin position="75"/>
        <end position="85"/>
    </location>
</feature>
<protein>
    <recommendedName>
        <fullName evidence="1">Small ribosomal subunit protein uS15</fullName>
    </recommendedName>
    <alternativeName>
        <fullName evidence="4">30S ribosomal protein S15</fullName>
    </alternativeName>
    <alternativeName>
        <fullName>BS18</fullName>
    </alternativeName>
</protein>
<accession>P05766</accession>
<proteinExistence type="evidence at protein level"/>
<comment type="function">
    <text evidence="1">One of the primary rRNA binding proteins, it binds directly to 16S rRNA where it helps nucleate assembly of the platform of the 30S subunit by binding and bridging several RNA helices of the 16S rRNA.</text>
</comment>
<comment type="function">
    <text evidence="1">Forms an intersubunit bridge (bridge B4) with the 23S rRNA of the 50S subunit in the ribosome.</text>
</comment>
<comment type="subunit">
    <text evidence="1">Part of the 30S ribosomal subunit. Forms a bridge to the 50S subunit in the 70S ribosome, contacting the 23S rRNA.</text>
</comment>
<comment type="similarity">
    <text evidence="1">Belongs to the universal ribosomal protein uS15 family.</text>
</comment>
<gene>
    <name evidence="1" type="primary">rpsO</name>
</gene>
<name>RS15_GEOSE</name>
<keyword id="KW-0002">3D-structure</keyword>
<keyword id="KW-0903">Direct protein sequencing</keyword>
<keyword id="KW-0687">Ribonucleoprotein</keyword>
<keyword id="KW-0689">Ribosomal protein</keyword>
<keyword id="KW-0694">RNA-binding</keyword>
<keyword id="KW-0699">rRNA-binding</keyword>
<dbReference type="RefSeq" id="WP_033016867.1">
    <property type="nucleotide sequence ID" value="NZ_RCTK01000001.1"/>
</dbReference>
<dbReference type="PDB" id="1A32">
    <property type="method" value="X-ray"/>
    <property type="resolution" value="2.10 A"/>
    <property type="chains" value="A=2-89"/>
</dbReference>
<dbReference type="PDBsum" id="1A32"/>
<dbReference type="SMR" id="P05766"/>
<dbReference type="IntAct" id="P05766">
    <property type="interactions" value="6"/>
</dbReference>
<dbReference type="GeneID" id="89611525"/>
<dbReference type="OrthoDB" id="9799262at2"/>
<dbReference type="EvolutionaryTrace" id="P05766"/>
<dbReference type="GO" id="GO:0022627">
    <property type="term" value="C:cytosolic small ribosomal subunit"/>
    <property type="evidence" value="ECO:0007669"/>
    <property type="project" value="TreeGrafter"/>
</dbReference>
<dbReference type="GO" id="GO:0019843">
    <property type="term" value="F:rRNA binding"/>
    <property type="evidence" value="ECO:0007669"/>
    <property type="project" value="UniProtKB-UniRule"/>
</dbReference>
<dbReference type="GO" id="GO:0003735">
    <property type="term" value="F:structural constituent of ribosome"/>
    <property type="evidence" value="ECO:0007669"/>
    <property type="project" value="InterPro"/>
</dbReference>
<dbReference type="GO" id="GO:0006412">
    <property type="term" value="P:translation"/>
    <property type="evidence" value="ECO:0007669"/>
    <property type="project" value="UniProtKB-UniRule"/>
</dbReference>
<dbReference type="CDD" id="cd00353">
    <property type="entry name" value="Ribosomal_S15p_S13e"/>
    <property type="match status" value="1"/>
</dbReference>
<dbReference type="FunFam" id="1.10.287.10:FF:000002">
    <property type="entry name" value="30S ribosomal protein S15"/>
    <property type="match status" value="1"/>
</dbReference>
<dbReference type="Gene3D" id="6.10.250.3130">
    <property type="match status" value="1"/>
</dbReference>
<dbReference type="Gene3D" id="1.10.287.10">
    <property type="entry name" value="S15/NS1, RNA-binding"/>
    <property type="match status" value="1"/>
</dbReference>
<dbReference type="HAMAP" id="MF_01343_B">
    <property type="entry name" value="Ribosomal_uS15_B"/>
    <property type="match status" value="1"/>
</dbReference>
<dbReference type="InterPro" id="IPR000589">
    <property type="entry name" value="Ribosomal_uS15"/>
</dbReference>
<dbReference type="InterPro" id="IPR005290">
    <property type="entry name" value="Ribosomal_uS15_bac-type"/>
</dbReference>
<dbReference type="InterPro" id="IPR009068">
    <property type="entry name" value="uS15_NS1_RNA-bd_sf"/>
</dbReference>
<dbReference type="NCBIfam" id="TIGR00952">
    <property type="entry name" value="S15_bact"/>
    <property type="match status" value="1"/>
</dbReference>
<dbReference type="PANTHER" id="PTHR23321">
    <property type="entry name" value="RIBOSOMAL PROTEIN S15, BACTERIAL AND ORGANELLAR"/>
    <property type="match status" value="1"/>
</dbReference>
<dbReference type="PANTHER" id="PTHR23321:SF26">
    <property type="entry name" value="SMALL RIBOSOMAL SUBUNIT PROTEIN US15M"/>
    <property type="match status" value="1"/>
</dbReference>
<dbReference type="Pfam" id="PF00312">
    <property type="entry name" value="Ribosomal_S15"/>
    <property type="match status" value="1"/>
</dbReference>
<dbReference type="SMART" id="SM01387">
    <property type="entry name" value="Ribosomal_S15"/>
    <property type="match status" value="1"/>
</dbReference>
<dbReference type="SUPFAM" id="SSF47060">
    <property type="entry name" value="S15/NS1 RNA-binding domain"/>
    <property type="match status" value="1"/>
</dbReference>
<dbReference type="PROSITE" id="PS00362">
    <property type="entry name" value="RIBOSOMAL_S15"/>
    <property type="match status" value="1"/>
</dbReference>
<sequence>MALTQERKREIIEQFKVHENDTGSPEVQIAILTEQINNLNEHLRVHKKDHHSRRGLLKMVGKRRRLLAYLRNKDVARYREIVEKLGLRR</sequence>